<keyword id="KW-0002">3D-structure</keyword>
<keyword id="KW-0963">Cytoplasm</keyword>
<keyword id="KW-1185">Reference proteome</keyword>
<keyword id="KW-0687">Ribonucleoprotein</keyword>
<keyword id="KW-0689">Ribosomal protein</keyword>
<keyword id="KW-0698">rRNA processing</keyword>
<feature type="chain" id="PRO_0000456559" description="Small ribosomal subunit protein eS21">
    <location>
        <begin position="1"/>
        <end position="87"/>
    </location>
</feature>
<accession>A0A1D8PCG7</accession>
<organism>
    <name type="scientific">Candida albicans (strain SC5314 / ATCC MYA-2876)</name>
    <name type="common">Yeast</name>
    <dbReference type="NCBI Taxonomy" id="237561"/>
    <lineage>
        <taxon>Eukaryota</taxon>
        <taxon>Fungi</taxon>
        <taxon>Dikarya</taxon>
        <taxon>Ascomycota</taxon>
        <taxon>Saccharomycotina</taxon>
        <taxon>Pichiomycetes</taxon>
        <taxon>Debaryomycetaceae</taxon>
        <taxon>Candida/Lodderomyces clade</taxon>
        <taxon>Candida</taxon>
    </lineage>
</organism>
<reference key="1">
    <citation type="journal article" date="2004" name="Proc. Natl. Acad. Sci. U.S.A.">
        <title>The diploid genome sequence of Candida albicans.</title>
        <authorList>
            <person name="Jones T."/>
            <person name="Federspiel N.A."/>
            <person name="Chibana H."/>
            <person name="Dungan J."/>
            <person name="Kalman S."/>
            <person name="Magee B.B."/>
            <person name="Newport G."/>
            <person name="Thorstenson Y.R."/>
            <person name="Agabian N."/>
            <person name="Magee P.T."/>
            <person name="Davis R.W."/>
            <person name="Scherer S."/>
        </authorList>
    </citation>
    <scope>NUCLEOTIDE SEQUENCE [LARGE SCALE GENOMIC DNA]</scope>
    <source>
        <strain>SC5314 / ATCC MYA-2876</strain>
    </source>
</reference>
<reference key="2">
    <citation type="journal article" date="2007" name="Genome Biol.">
        <title>Assembly of the Candida albicans genome into sixteen supercontigs aligned on the eight chromosomes.</title>
        <authorList>
            <person name="van het Hoog M."/>
            <person name="Rast T.J."/>
            <person name="Martchenko M."/>
            <person name="Grindle S."/>
            <person name="Dignard D."/>
            <person name="Hogues H."/>
            <person name="Cuomo C."/>
            <person name="Berriman M."/>
            <person name="Scherer S."/>
            <person name="Magee B.B."/>
            <person name="Whiteway M."/>
            <person name="Chibana H."/>
            <person name="Nantel A."/>
            <person name="Magee P.T."/>
        </authorList>
    </citation>
    <scope>GENOME REANNOTATION</scope>
    <source>
        <strain>SC5314 / ATCC MYA-2876</strain>
    </source>
</reference>
<reference key="3">
    <citation type="journal article" date="2013" name="Genome Biol.">
        <title>Assembly of a phased diploid Candida albicans genome facilitates allele-specific measurements and provides a simple model for repeat and indel structure.</title>
        <authorList>
            <person name="Muzzey D."/>
            <person name="Schwartz K."/>
            <person name="Weissman J.S."/>
            <person name="Sherlock G."/>
        </authorList>
    </citation>
    <scope>NUCLEOTIDE SEQUENCE [LARGE SCALE GENOMIC DNA]</scope>
    <scope>GENOME REANNOTATION</scope>
    <source>
        <strain>SC5314 / ATCC MYA-2876</strain>
    </source>
</reference>
<reference evidence="6 7 8" key="4">
    <citation type="journal article" date="2022" name="Sci. Adv.">
        <title>E-site drug specificity of the human pathogen Candida albicans ribosome.</title>
        <authorList>
            <person name="Zgadzay Y."/>
            <person name="Kolosova O."/>
            <person name="Stetsenko A."/>
            <person name="Wu C."/>
            <person name="Bruchlen D."/>
            <person name="Usachev K."/>
            <person name="Validov S."/>
            <person name="Jenner L."/>
            <person name="Rogachev A."/>
            <person name="Yusupova G."/>
            <person name="Sachs M.S."/>
            <person name="Guskov A."/>
            <person name="Yusupov M."/>
        </authorList>
    </citation>
    <scope>STRUCTURE BY ELECTRON MICROSCOPY (2.32 ANGSTROMS) OF THE 80S RIBOSOME</scope>
    <scope>SUBUNIT</scope>
</reference>
<sequence>MENDKGQLVELYVPRKCSATNRIIKAKDHASVQISIAKVDEDGRAIAGENITYALSGYVRGRGEADDSLNRLAQQDGLLKNVWSYSR</sequence>
<proteinExistence type="evidence at protein level"/>
<protein>
    <recommendedName>
        <fullName evidence="3">Small ribosomal subunit protein eS21</fullName>
    </recommendedName>
    <alternativeName>
        <fullName>40S ribosomal protein S21</fullName>
    </alternativeName>
</protein>
<comment type="function">
    <text evidence="1 5">Component of the ribosome, a large ribonucleoprotein complex responsible for the synthesis of proteins in the cell. The small ribosomal subunit (SSU) binds messenger RNAs (mRNAs) and translates the encoded message by selecting cognate aminoacyl-transfer RNA (tRNA) molecules. The large subunit (LSU) contains the ribosomal catalytic site termed the peptidyl transferase center (PTC), which catalyzes the formation of peptide bonds, thereby polymerizing the amino acids delivered by tRNAs into a polypeptide chain. The nascent polypeptides leave the ribosome through a tunnel in the LSU and interact with protein factors that function in enzymatic processing, targeting, and the membrane insertion of nascent chains at the exit of the ribosomal tunnel (Probable). RPS21B is required for the processing of the 20S rRNA-precursor to mature 18S rRNA in a late step of the maturation of 40S ribosomal subunits and has a physiological role leading to 18S rRNA stability (By similarity).</text>
</comment>
<comment type="subunit">
    <text evidence="2">Component of the small ribosomal subunit (PubMed:35613268). Mature ribosomes consist of a small (40S) and a large (60S) subunit (PubMed:35613268). The 40S subunit contains about 32 different proteins and 1 molecule of RNA (18S) (PubMed:35613268). The 60S subunit contains 45 different proteins and 3 molecules of RNA (25S, 5.8S and 5S) (PubMed:35613268).</text>
</comment>
<comment type="subcellular location">
    <subcellularLocation>
        <location evidence="5">Cytoplasm</location>
    </subcellularLocation>
</comment>
<comment type="similarity">
    <text evidence="4">Belongs to the eukaryotic ribosomal protein eS21 family.</text>
</comment>
<dbReference type="EMBL" id="CP017623">
    <property type="protein sequence ID" value="AOW25830.1"/>
    <property type="molecule type" value="Genomic_DNA"/>
</dbReference>
<dbReference type="RefSeq" id="XP_019330609.1">
    <property type="nucleotide sequence ID" value="XM_019475064.1"/>
</dbReference>
<dbReference type="PDB" id="7PZY">
    <property type="method" value="EM"/>
    <property type="resolution" value="2.32 A"/>
    <property type="chains" value="W=1-87"/>
</dbReference>
<dbReference type="PDB" id="7Q08">
    <property type="method" value="EM"/>
    <property type="resolution" value="2.56 A"/>
    <property type="chains" value="W=1-87"/>
</dbReference>
<dbReference type="PDB" id="7Q0F">
    <property type="method" value="EM"/>
    <property type="resolution" value="2.64 A"/>
    <property type="chains" value="W=1-87"/>
</dbReference>
<dbReference type="PDB" id="7Q0P">
    <property type="method" value="EM"/>
    <property type="resolution" value="2.77 A"/>
    <property type="chains" value="W=1-87"/>
</dbReference>
<dbReference type="PDB" id="7Q0R">
    <property type="method" value="EM"/>
    <property type="resolution" value="2.67 A"/>
    <property type="chains" value="W=1-87"/>
</dbReference>
<dbReference type="PDBsum" id="7PZY"/>
<dbReference type="PDBsum" id="7Q08"/>
<dbReference type="PDBsum" id="7Q0F"/>
<dbReference type="PDBsum" id="7Q0P"/>
<dbReference type="PDBsum" id="7Q0R"/>
<dbReference type="EMDB" id="EMD-13737"/>
<dbReference type="EMDB" id="EMD-13741"/>
<dbReference type="EMDB" id="EMD-13744"/>
<dbReference type="EMDB" id="EMD-13749"/>
<dbReference type="EMDB" id="EMD-13750"/>
<dbReference type="SMR" id="A0A1D8PCG7"/>
<dbReference type="FunCoup" id="A0A1D8PCG7">
    <property type="interactions" value="987"/>
</dbReference>
<dbReference type="STRING" id="237561.A0A1D8PCG7"/>
<dbReference type="EnsemblFungi" id="C1_01370C_A-T">
    <property type="protein sequence ID" value="C1_01370C_A-T-p1"/>
    <property type="gene ID" value="C1_01370C_A"/>
</dbReference>
<dbReference type="GeneID" id="30514961"/>
<dbReference type="KEGG" id="cal:CAALFM_C101370CA"/>
<dbReference type="CGD" id="CAL0000190545">
    <property type="gene designation" value="RPS21B"/>
</dbReference>
<dbReference type="VEuPathDB" id="FungiDB:C1_01370C_A"/>
<dbReference type="eggNOG" id="KOG3486">
    <property type="taxonomic scope" value="Eukaryota"/>
</dbReference>
<dbReference type="InParanoid" id="A0A1D8PCG7"/>
<dbReference type="OMA" id="GESDACM"/>
<dbReference type="OrthoDB" id="278325at2759"/>
<dbReference type="Proteomes" id="UP000000559">
    <property type="component" value="Chromosome 1"/>
</dbReference>
<dbReference type="GO" id="GO:0022627">
    <property type="term" value="C:cytosolic small ribosomal subunit"/>
    <property type="evidence" value="ECO:0000318"/>
    <property type="project" value="GO_Central"/>
</dbReference>
<dbReference type="GO" id="GO:0003735">
    <property type="term" value="F:structural constituent of ribosome"/>
    <property type="evidence" value="ECO:0000318"/>
    <property type="project" value="GO_Central"/>
</dbReference>
<dbReference type="GO" id="GO:0000447">
    <property type="term" value="P:endonucleolytic cleavage in ITS1 to separate SSU-rRNA from 5.8S rRNA and LSU-rRNA from tricistronic rRNA transcript (SSU-rRNA, 5.8S rRNA, LSU-rRNA)"/>
    <property type="evidence" value="ECO:0000318"/>
    <property type="project" value="GO_Central"/>
</dbReference>
<dbReference type="GO" id="GO:0000461">
    <property type="term" value="P:endonucleolytic cleavage to generate mature 3'-end of SSU-rRNA from (SSU-rRNA, 5.8S rRNA, LSU-rRNA)"/>
    <property type="evidence" value="ECO:0000318"/>
    <property type="project" value="GO_Central"/>
</dbReference>
<dbReference type="GO" id="GO:0006412">
    <property type="term" value="P:translation"/>
    <property type="evidence" value="ECO:0007669"/>
    <property type="project" value="InterPro"/>
</dbReference>
<dbReference type="FunFam" id="3.30.1230.20:FF:000001">
    <property type="entry name" value="40S ribosomal protein S21"/>
    <property type="match status" value="1"/>
</dbReference>
<dbReference type="Gene3D" id="3.30.1230.20">
    <property type="match status" value="1"/>
</dbReference>
<dbReference type="InterPro" id="IPR001931">
    <property type="entry name" value="Ribosomal_eS21"/>
</dbReference>
<dbReference type="InterPro" id="IPR018279">
    <property type="entry name" value="Ribosomal_eS21_CS"/>
</dbReference>
<dbReference type="InterPro" id="IPR038579">
    <property type="entry name" value="Ribosomal_eS21_sf"/>
</dbReference>
<dbReference type="PANTHER" id="PTHR10442">
    <property type="entry name" value="40S RIBOSOMAL PROTEIN S21"/>
    <property type="match status" value="1"/>
</dbReference>
<dbReference type="Pfam" id="PF01249">
    <property type="entry name" value="Ribosomal_S21e"/>
    <property type="match status" value="1"/>
</dbReference>
<dbReference type="PIRSF" id="PIRSF002148">
    <property type="entry name" value="Ribosomal_S21e"/>
    <property type="match status" value="1"/>
</dbReference>
<dbReference type="PROSITE" id="PS00996">
    <property type="entry name" value="RIBOSOMAL_S21E"/>
    <property type="match status" value="1"/>
</dbReference>
<gene>
    <name type="primary">RPS21B</name>
    <name type="ORF">CAALFM_C101370CA</name>
</gene>
<evidence type="ECO:0000250" key="1">
    <source>
        <dbReference type="UniProtKB" id="P0C0V8"/>
    </source>
</evidence>
<evidence type="ECO:0000269" key="2">
    <source>
    </source>
</evidence>
<evidence type="ECO:0000303" key="3">
    <source>
    </source>
</evidence>
<evidence type="ECO:0000305" key="4"/>
<evidence type="ECO:0000305" key="5">
    <source>
    </source>
</evidence>
<evidence type="ECO:0007744" key="6">
    <source>
        <dbReference type="PDB" id="7PZY"/>
    </source>
</evidence>
<evidence type="ECO:0007744" key="7">
    <source>
        <dbReference type="PDB" id="7Q0F"/>
    </source>
</evidence>
<evidence type="ECO:0007744" key="8">
    <source>
        <dbReference type="PDB" id="7Q0P"/>
    </source>
</evidence>
<name>RS21B_CANAL</name>